<reference key="1">
    <citation type="journal article" date="2002" name="J. Mol. Microbiol. Biotechnol.">
        <title>The genome of Methanosarcina mazei: evidence for lateral gene transfer between Bacteria and Archaea.</title>
        <authorList>
            <person name="Deppenmeier U."/>
            <person name="Johann A."/>
            <person name="Hartsch T."/>
            <person name="Merkl R."/>
            <person name="Schmitz R.A."/>
            <person name="Martinez-Arias R."/>
            <person name="Henne A."/>
            <person name="Wiezer A."/>
            <person name="Baeumer S."/>
            <person name="Jacobi C."/>
            <person name="Brueggemann H."/>
            <person name="Lienard T."/>
            <person name="Christmann A."/>
            <person name="Boemecke M."/>
            <person name="Steckel S."/>
            <person name="Bhattacharyya A."/>
            <person name="Lykidis A."/>
            <person name="Overbeek R."/>
            <person name="Klenk H.-P."/>
            <person name="Gunsalus R.P."/>
            <person name="Fritz H.-J."/>
            <person name="Gottschalk G."/>
        </authorList>
    </citation>
    <scope>NUCLEOTIDE SEQUENCE [LARGE SCALE GENOMIC DNA]</scope>
    <source>
        <strain>ATCC BAA-159 / DSM 3647 / Goe1 / Go1 / JCM 11833 / OCM 88</strain>
    </source>
</reference>
<organism>
    <name type="scientific">Methanosarcina mazei (strain ATCC BAA-159 / DSM 3647 / Goe1 / Go1 / JCM 11833 / OCM 88)</name>
    <name type="common">Methanosarcina frisia</name>
    <dbReference type="NCBI Taxonomy" id="192952"/>
    <lineage>
        <taxon>Archaea</taxon>
        <taxon>Methanobacteriati</taxon>
        <taxon>Methanobacteriota</taxon>
        <taxon>Stenosarchaea group</taxon>
        <taxon>Methanomicrobia</taxon>
        <taxon>Methanosarcinales</taxon>
        <taxon>Methanosarcinaceae</taxon>
        <taxon>Methanosarcina</taxon>
    </lineage>
</organism>
<dbReference type="EC" id="1.8.7.3" evidence="2"/>
<dbReference type="EMBL" id="AE008384">
    <property type="protein sequence ID" value="AAM30676.1"/>
    <property type="status" value="ALT_INIT"/>
    <property type="molecule type" value="Genomic_DNA"/>
</dbReference>
<dbReference type="RefSeq" id="WP_048041296.1">
    <property type="nucleotide sequence ID" value="NC_003901.1"/>
</dbReference>
<dbReference type="SMR" id="Q8PY83"/>
<dbReference type="TCDB" id="3.D.7.1.7">
    <property type="family name" value="the h2:heterodisulfide oxidoreductase (hho) family"/>
</dbReference>
<dbReference type="GeneID" id="82160004"/>
<dbReference type="KEGG" id="mma:MM_0980"/>
<dbReference type="PATRIC" id="fig|192952.21.peg.1155"/>
<dbReference type="eggNOG" id="arCOG00338">
    <property type="taxonomic scope" value="Archaea"/>
</dbReference>
<dbReference type="HOGENOM" id="CLU_052147_1_0_2"/>
<dbReference type="UniPathway" id="UPA00647">
    <property type="reaction ID" value="UER00700"/>
</dbReference>
<dbReference type="Proteomes" id="UP000000595">
    <property type="component" value="Chromosome"/>
</dbReference>
<dbReference type="GO" id="GO:0005737">
    <property type="term" value="C:cytoplasm"/>
    <property type="evidence" value="ECO:0007669"/>
    <property type="project" value="UniProtKB-SubCell"/>
</dbReference>
<dbReference type="GO" id="GO:0051539">
    <property type="term" value="F:4 iron, 4 sulfur cluster binding"/>
    <property type="evidence" value="ECO:0007669"/>
    <property type="project" value="UniProtKB-KW"/>
</dbReference>
<dbReference type="GO" id="GO:0051912">
    <property type="term" value="F:CoB--CoM heterodisulfide reductase activity"/>
    <property type="evidence" value="ECO:0007669"/>
    <property type="project" value="InterPro"/>
</dbReference>
<dbReference type="GO" id="GO:0046872">
    <property type="term" value="F:metal ion binding"/>
    <property type="evidence" value="ECO:0007669"/>
    <property type="project" value="UniProtKB-KW"/>
</dbReference>
<dbReference type="GO" id="GO:0015948">
    <property type="term" value="P:methanogenesis"/>
    <property type="evidence" value="ECO:0007669"/>
    <property type="project" value="UniProtKB-KW"/>
</dbReference>
<dbReference type="Gene3D" id="1.20.1050.140">
    <property type="match status" value="1"/>
</dbReference>
<dbReference type="InterPro" id="IPR017678">
    <property type="entry name" value="CoB/CoM_hetero-S_Rdtase_bsu"/>
</dbReference>
<dbReference type="InterPro" id="IPR004017">
    <property type="entry name" value="Cys_rich_dom"/>
</dbReference>
<dbReference type="InterPro" id="IPR051278">
    <property type="entry name" value="HdrB/HdrD_reductase"/>
</dbReference>
<dbReference type="NCBIfam" id="TIGR03288">
    <property type="entry name" value="CoB_CoM_SS_B"/>
    <property type="match status" value="1"/>
</dbReference>
<dbReference type="PANTHER" id="PTHR42947">
    <property type="entry name" value="COB--COM HETERODISULFIDE REDUCTASE SUBUNIT B 1"/>
    <property type="match status" value="1"/>
</dbReference>
<dbReference type="PANTHER" id="PTHR42947:SF1">
    <property type="entry name" value="COB--COM HETERODISULFIDE REDUCTASE SUBUNIT B 1"/>
    <property type="match status" value="1"/>
</dbReference>
<dbReference type="Pfam" id="PF02754">
    <property type="entry name" value="CCG"/>
    <property type="match status" value="2"/>
</dbReference>
<name>HDRB_METMA</name>
<sequence>MNKLSLFLGCIVPNRYPGIEKATKLCLQRLEIDACDLPGASCCPAPGVFKSFDKATWLALASRNIVLSERMERDVLTVCNGCYGSLADANMELKKDPEMKACTNSCLKEIGMEFRGTSEIRHIIEFLYKEFGPEKLKEYITTPLDLKVALHYGCHLIKPSKDRNLGDTESPVFFDELVEATGAKSVDYTDKMMCCGAGGGVRSGYADESLEMLEHKLDCICKAGVDCIVNACPFCHLQFDRGQIAVNEKFGTDYSIPVLHYSQLLGLALGFSPDQLGIEQNAVQNIEFLAKIYEISAGLS</sequence>
<proteinExistence type="inferred from homology"/>
<gene>
    <name type="primary">hdrB</name>
    <name type="ordered locus">MM_0980</name>
</gene>
<comment type="function">
    <text evidence="2">Part of a complex that catalyzes the reversible reduction of CoM-S-S-CoB to the thiol-coenzymes H-S-CoM (coenzyme M) and H-S-CoB (coenzyme B).</text>
</comment>
<comment type="catalytic activity">
    <reaction evidence="2">
        <text>coenzyme B + coenzyme M + 2 oxidized [2Fe-2S]-[ferredoxin] = coenzyme M-coenzyme B heterodisulfide + 2 reduced [2Fe-2S]-[ferredoxin] + 2 H(+)</text>
        <dbReference type="Rhea" id="RHEA:55160"/>
        <dbReference type="Rhea" id="RHEA-COMP:10000"/>
        <dbReference type="Rhea" id="RHEA-COMP:10001"/>
        <dbReference type="ChEBI" id="CHEBI:15378"/>
        <dbReference type="ChEBI" id="CHEBI:33737"/>
        <dbReference type="ChEBI" id="CHEBI:33738"/>
        <dbReference type="ChEBI" id="CHEBI:58319"/>
        <dbReference type="ChEBI" id="CHEBI:58411"/>
        <dbReference type="ChEBI" id="CHEBI:58596"/>
        <dbReference type="EC" id="1.8.7.3"/>
    </reaction>
</comment>
<comment type="cofactor">
    <cofactor evidence="1">
        <name>[4Fe-4S] cluster</name>
        <dbReference type="ChEBI" id="CHEBI:49883"/>
    </cofactor>
    <text evidence="1">Binds 1 [4Fe-4S] cluster.</text>
</comment>
<comment type="pathway">
    <text evidence="2">Cofactor metabolism; coenzyme M-coenzyme B heterodisulfide reduction; coenzyme B and coenzyme M from coenzyme M-coenzyme B heterodisulfide: step 1/1.</text>
</comment>
<comment type="subunit">
    <text evidence="2">The ferredoxin:CoB-CoM heterodisulfide reductase is composed of three subunits; HdrA, HdrB and HdrC.</text>
</comment>
<comment type="subcellular location">
    <subcellularLocation>
        <location evidence="2">Cytoplasm</location>
    </subcellularLocation>
</comment>
<comment type="similarity">
    <text evidence="3">Belongs to the HdrB family.</text>
</comment>
<comment type="sequence caution" evidence="3">
    <conflict type="erroneous initiation">
        <sequence resource="EMBL-CDS" id="AAM30676"/>
    </conflict>
</comment>
<keyword id="KW-0004">4Fe-4S</keyword>
<keyword id="KW-0963">Cytoplasm</keyword>
<keyword id="KW-0408">Iron</keyword>
<keyword id="KW-0411">Iron-sulfur</keyword>
<keyword id="KW-0479">Metal-binding</keyword>
<keyword id="KW-0484">Methanogenesis</keyword>
<keyword id="KW-0560">Oxidoreductase</keyword>
<evidence type="ECO:0000250" key="1">
    <source>
        <dbReference type="UniProtKB" id="Q8TIB8"/>
    </source>
</evidence>
<evidence type="ECO:0000250" key="2">
    <source>
        <dbReference type="UniProtKB" id="Q8TLB2"/>
    </source>
</evidence>
<evidence type="ECO:0000305" key="3"/>
<protein>
    <recommendedName>
        <fullName evidence="2">Ferredoxin:CoB-CoM heterodisulfide reductase subunit B</fullName>
        <ecNumber evidence="2">1.8.7.3</ecNumber>
    </recommendedName>
</protein>
<accession>Q8PY83</accession>
<feature type="chain" id="PRO_0000150068" description="Ferredoxin:CoB-CoM heterodisulfide reductase subunit B">
    <location>
        <begin position="1"/>
        <end position="300"/>
    </location>
</feature>